<proteinExistence type="inferred from homology"/>
<comment type="function">
    <text evidence="2">Component of the ubiquinol-cytochrome c reductase complex (complex III or cytochrome b-c1 complex) that is part of the mitochondrial respiratory chain. The b-c1 complex mediates electron transfer from ubiquinol to cytochrome c. Contributes to the generation of a proton gradient across the mitochondrial membrane that is then used for ATP synthesis.</text>
</comment>
<comment type="cofactor">
    <cofactor evidence="2">
        <name>heme b</name>
        <dbReference type="ChEBI" id="CHEBI:60344"/>
    </cofactor>
    <text evidence="2">Binds 2 heme b groups non-covalently.</text>
</comment>
<comment type="subunit">
    <text evidence="2">The cytochrome bc1 complex contains 11 subunits: 3 respiratory subunits (MT-CYB, CYC1 and UQCRFS1), 2 core proteins (UQCRC1 and UQCRC2) and 6 low-molecular weight proteins (UQCRH/QCR6, UQCRB/QCR7, UQCRQ/QCR8, UQCR10/QCR9, UQCR11/QCR10 and a cleavage product of UQCRFS1). This cytochrome bc1 complex then forms a dimer.</text>
</comment>
<comment type="subcellular location">
    <subcellularLocation>
        <location evidence="2">Mitochondrion inner membrane</location>
        <topology evidence="2">Multi-pass membrane protein</topology>
    </subcellularLocation>
</comment>
<comment type="miscellaneous">
    <text evidence="1">Heme 1 (or BL or b562) is low-potential and absorbs at about 562 nm, and heme 2 (or BH or b566) is high-potential and absorbs at about 566 nm.</text>
</comment>
<comment type="similarity">
    <text evidence="3 4">Belongs to the cytochrome b family.</text>
</comment>
<comment type="caution">
    <text evidence="2">The full-length protein contains only eight transmembrane helices, not nine as predicted by bioinformatics tools.</text>
</comment>
<protein>
    <recommendedName>
        <fullName>Cytochrome b</fullName>
    </recommendedName>
    <alternativeName>
        <fullName>Complex III subunit 3</fullName>
    </alternativeName>
    <alternativeName>
        <fullName>Complex III subunit III</fullName>
    </alternativeName>
    <alternativeName>
        <fullName>Cytochrome b-c1 complex subunit 3</fullName>
    </alternativeName>
    <alternativeName>
        <fullName>Ubiquinol-cytochrome-c reductase complex cytochrome b subunit</fullName>
    </alternativeName>
</protein>
<geneLocation type="mitochondrion"/>
<accession>Q5J1T3</accession>
<evidence type="ECO:0000250" key="1"/>
<evidence type="ECO:0000250" key="2">
    <source>
        <dbReference type="UniProtKB" id="P00157"/>
    </source>
</evidence>
<evidence type="ECO:0000255" key="3">
    <source>
        <dbReference type="PROSITE-ProRule" id="PRU00967"/>
    </source>
</evidence>
<evidence type="ECO:0000255" key="4">
    <source>
        <dbReference type="PROSITE-ProRule" id="PRU00968"/>
    </source>
</evidence>
<dbReference type="EMBL" id="AY534300">
    <property type="protein sequence ID" value="AAT77443.1"/>
    <property type="molecule type" value="Genomic_DNA"/>
</dbReference>
<dbReference type="SMR" id="Q5J1T3"/>
<dbReference type="GO" id="GO:0005743">
    <property type="term" value="C:mitochondrial inner membrane"/>
    <property type="evidence" value="ECO:0007669"/>
    <property type="project" value="UniProtKB-SubCell"/>
</dbReference>
<dbReference type="GO" id="GO:0045275">
    <property type="term" value="C:respiratory chain complex III"/>
    <property type="evidence" value="ECO:0007669"/>
    <property type="project" value="InterPro"/>
</dbReference>
<dbReference type="GO" id="GO:0046872">
    <property type="term" value="F:metal ion binding"/>
    <property type="evidence" value="ECO:0007669"/>
    <property type="project" value="UniProtKB-KW"/>
</dbReference>
<dbReference type="GO" id="GO:0008121">
    <property type="term" value="F:ubiquinol-cytochrome-c reductase activity"/>
    <property type="evidence" value="ECO:0007669"/>
    <property type="project" value="InterPro"/>
</dbReference>
<dbReference type="GO" id="GO:0006122">
    <property type="term" value="P:mitochondrial electron transport, ubiquinol to cytochrome c"/>
    <property type="evidence" value="ECO:0007669"/>
    <property type="project" value="TreeGrafter"/>
</dbReference>
<dbReference type="CDD" id="cd00290">
    <property type="entry name" value="cytochrome_b_C"/>
    <property type="match status" value="1"/>
</dbReference>
<dbReference type="CDD" id="cd00284">
    <property type="entry name" value="Cytochrome_b_N"/>
    <property type="match status" value="1"/>
</dbReference>
<dbReference type="FunFam" id="1.20.810.10:FF:000002">
    <property type="entry name" value="Cytochrome b"/>
    <property type="match status" value="1"/>
</dbReference>
<dbReference type="Gene3D" id="1.20.810.10">
    <property type="entry name" value="Cytochrome Bc1 Complex, Chain C"/>
    <property type="match status" value="1"/>
</dbReference>
<dbReference type="InterPro" id="IPR005798">
    <property type="entry name" value="Cyt_b/b6_C"/>
</dbReference>
<dbReference type="InterPro" id="IPR036150">
    <property type="entry name" value="Cyt_b/b6_C_sf"/>
</dbReference>
<dbReference type="InterPro" id="IPR005797">
    <property type="entry name" value="Cyt_b/b6_N"/>
</dbReference>
<dbReference type="InterPro" id="IPR027387">
    <property type="entry name" value="Cytb/b6-like_sf"/>
</dbReference>
<dbReference type="InterPro" id="IPR030689">
    <property type="entry name" value="Cytochrome_b"/>
</dbReference>
<dbReference type="InterPro" id="IPR048260">
    <property type="entry name" value="Cytochrome_b_C_euk/bac"/>
</dbReference>
<dbReference type="InterPro" id="IPR048259">
    <property type="entry name" value="Cytochrome_b_N_euk/bac"/>
</dbReference>
<dbReference type="InterPro" id="IPR016174">
    <property type="entry name" value="Di-haem_cyt_TM"/>
</dbReference>
<dbReference type="PANTHER" id="PTHR19271">
    <property type="entry name" value="CYTOCHROME B"/>
    <property type="match status" value="1"/>
</dbReference>
<dbReference type="PANTHER" id="PTHR19271:SF16">
    <property type="entry name" value="CYTOCHROME B"/>
    <property type="match status" value="1"/>
</dbReference>
<dbReference type="Pfam" id="PF00032">
    <property type="entry name" value="Cytochrom_B_C"/>
    <property type="match status" value="1"/>
</dbReference>
<dbReference type="Pfam" id="PF00033">
    <property type="entry name" value="Cytochrome_B"/>
    <property type="match status" value="1"/>
</dbReference>
<dbReference type="PIRSF" id="PIRSF038885">
    <property type="entry name" value="COB"/>
    <property type="match status" value="1"/>
</dbReference>
<dbReference type="SUPFAM" id="SSF81648">
    <property type="entry name" value="a domain/subunit of cytochrome bc1 complex (Ubiquinol-cytochrome c reductase)"/>
    <property type="match status" value="1"/>
</dbReference>
<dbReference type="SUPFAM" id="SSF81342">
    <property type="entry name" value="Transmembrane di-heme cytochromes"/>
    <property type="match status" value="1"/>
</dbReference>
<dbReference type="PROSITE" id="PS51003">
    <property type="entry name" value="CYTB_CTER"/>
    <property type="match status" value="1"/>
</dbReference>
<dbReference type="PROSITE" id="PS51002">
    <property type="entry name" value="CYTB_NTER"/>
    <property type="match status" value="1"/>
</dbReference>
<keyword id="KW-0249">Electron transport</keyword>
<keyword id="KW-0349">Heme</keyword>
<keyword id="KW-0408">Iron</keyword>
<keyword id="KW-0472">Membrane</keyword>
<keyword id="KW-0479">Metal-binding</keyword>
<keyword id="KW-0496">Mitochondrion</keyword>
<keyword id="KW-0999">Mitochondrion inner membrane</keyword>
<keyword id="KW-0679">Respiratory chain</keyword>
<keyword id="KW-0812">Transmembrane</keyword>
<keyword id="KW-1133">Transmembrane helix</keyword>
<keyword id="KW-0813">Transport</keyword>
<keyword id="KW-0830">Ubiquinone</keyword>
<sequence>MTNIRKSHPLMKIINNAFIDLPAPSNISSWWNFGSLLGICLIFQILTGLFLAMHYTSDTTTAFSSVTHICRDVNYGWVIRYLHANGASMFFICLFIHVGRGLYYGSYMFLETWNIGVILLFTVMATAFMGYVLPWGQMSFWGATVITNLLSAIPYIGTDLVEWIWGGFSVDKATLTRFFAFHFILPFVITALAVVHLLFLHETGSNNPTGISSDMDKIPFHPYYTLKDILGALFMMLILLILVLFSPDLLGDPDNYTPANPLNTPPHIKPEWYFLFAYAILRSIPNKLGGVLALVASILILILMPMLHTSKQRSMMFRPLSQCLFWMLVADLITLTWIGGQPVEHPFIIIGQLASILYFLIILVLMPITSIIENNLLKW</sequence>
<gene>
    <name type="primary">MT-CYB</name>
    <name type="synonym">COB</name>
    <name type="synonym">CYTB</name>
    <name type="synonym">MTCYB</name>
</gene>
<reference key="1">
    <citation type="journal article" date="2005" name="J. Virol.">
        <title>Evolutionary spread and recombination of porcine endogenous retroviruses in the suiformes.</title>
        <authorList>
            <person name="Niebert M."/>
            <person name="Tonjes R.R."/>
        </authorList>
    </citation>
    <scope>NUCLEOTIDE SEQUENCE [GENOMIC DNA]</scope>
</reference>
<name>CYB_POTLA</name>
<feature type="chain" id="PRO_0000254749" description="Cytochrome b">
    <location>
        <begin position="1"/>
        <end position="379"/>
    </location>
</feature>
<feature type="transmembrane region" description="Helical" evidence="2">
    <location>
        <begin position="33"/>
        <end position="53"/>
    </location>
</feature>
<feature type="transmembrane region" description="Helical" evidence="2">
    <location>
        <begin position="77"/>
        <end position="98"/>
    </location>
</feature>
<feature type="transmembrane region" description="Helical" evidence="2">
    <location>
        <begin position="113"/>
        <end position="133"/>
    </location>
</feature>
<feature type="transmembrane region" description="Helical" evidence="2">
    <location>
        <begin position="178"/>
        <end position="198"/>
    </location>
</feature>
<feature type="transmembrane region" description="Helical" evidence="2">
    <location>
        <begin position="226"/>
        <end position="246"/>
    </location>
</feature>
<feature type="transmembrane region" description="Helical" evidence="2">
    <location>
        <begin position="288"/>
        <end position="308"/>
    </location>
</feature>
<feature type="transmembrane region" description="Helical" evidence="2">
    <location>
        <begin position="320"/>
        <end position="340"/>
    </location>
</feature>
<feature type="transmembrane region" description="Helical" evidence="2">
    <location>
        <begin position="347"/>
        <end position="367"/>
    </location>
</feature>
<feature type="binding site" description="axial binding residue" evidence="2">
    <location>
        <position position="83"/>
    </location>
    <ligand>
        <name>heme b</name>
        <dbReference type="ChEBI" id="CHEBI:60344"/>
        <label>b562</label>
    </ligand>
    <ligandPart>
        <name>Fe</name>
        <dbReference type="ChEBI" id="CHEBI:18248"/>
    </ligandPart>
</feature>
<feature type="binding site" description="axial binding residue" evidence="2">
    <location>
        <position position="97"/>
    </location>
    <ligand>
        <name>heme b</name>
        <dbReference type="ChEBI" id="CHEBI:60344"/>
        <label>b566</label>
    </ligand>
    <ligandPart>
        <name>Fe</name>
        <dbReference type="ChEBI" id="CHEBI:18248"/>
    </ligandPart>
</feature>
<feature type="binding site" description="axial binding residue" evidence="2">
    <location>
        <position position="182"/>
    </location>
    <ligand>
        <name>heme b</name>
        <dbReference type="ChEBI" id="CHEBI:60344"/>
        <label>b562</label>
    </ligand>
    <ligandPart>
        <name>Fe</name>
        <dbReference type="ChEBI" id="CHEBI:18248"/>
    </ligandPart>
</feature>
<feature type="binding site" description="axial binding residue" evidence="2">
    <location>
        <position position="196"/>
    </location>
    <ligand>
        <name>heme b</name>
        <dbReference type="ChEBI" id="CHEBI:60344"/>
        <label>b566</label>
    </ligand>
    <ligandPart>
        <name>Fe</name>
        <dbReference type="ChEBI" id="CHEBI:18248"/>
    </ligandPart>
</feature>
<feature type="binding site" evidence="2">
    <location>
        <position position="201"/>
    </location>
    <ligand>
        <name>a ubiquinone</name>
        <dbReference type="ChEBI" id="CHEBI:16389"/>
    </ligand>
</feature>
<organism>
    <name type="scientific">Potamochoerus larvatus</name>
    <name type="common">Bushpig</name>
    <dbReference type="NCBI Taxonomy" id="273792"/>
    <lineage>
        <taxon>Eukaryota</taxon>
        <taxon>Metazoa</taxon>
        <taxon>Chordata</taxon>
        <taxon>Craniata</taxon>
        <taxon>Vertebrata</taxon>
        <taxon>Euteleostomi</taxon>
        <taxon>Mammalia</taxon>
        <taxon>Eutheria</taxon>
        <taxon>Laurasiatheria</taxon>
        <taxon>Artiodactyla</taxon>
        <taxon>Suina</taxon>
        <taxon>Suidae</taxon>
        <taxon>Potamochoerus</taxon>
    </lineage>
</organism>